<protein>
    <recommendedName>
        <fullName evidence="11">Aspartate kinase FUB3</fullName>
        <ecNumber evidence="13">2.7.2.4</ecNumber>
    </recommendedName>
    <alternativeName>
        <fullName evidence="11">Fusaric acid biosynthesis protein 3</fullName>
    </alternativeName>
</protein>
<evidence type="ECO:0000255" key="1">
    <source>
        <dbReference type="PROSITE-ProRule" id="PRU01007"/>
    </source>
</evidence>
<evidence type="ECO:0000269" key="2">
    <source>
    </source>
</evidence>
<evidence type="ECO:0000269" key="3">
    <source>
    </source>
</evidence>
<evidence type="ECO:0000269" key="4">
    <source>
    </source>
</evidence>
<evidence type="ECO:0000269" key="5">
    <source>
    </source>
</evidence>
<evidence type="ECO:0000269" key="6">
    <source>
    </source>
</evidence>
<evidence type="ECO:0000269" key="7">
    <source>
    </source>
</evidence>
<evidence type="ECO:0000269" key="8">
    <source>
    </source>
</evidence>
<evidence type="ECO:0000269" key="9">
    <source>
    </source>
</evidence>
<evidence type="ECO:0000269" key="10">
    <source>
    </source>
</evidence>
<evidence type="ECO:0000303" key="11">
    <source>
    </source>
</evidence>
<evidence type="ECO:0000305" key="12"/>
<evidence type="ECO:0000305" key="13">
    <source>
    </source>
</evidence>
<feature type="chain" id="PRO_0000437312" description="Aspartate kinase FUB3">
    <location>
        <begin position="1"/>
        <end position="510"/>
    </location>
</feature>
<feature type="domain" description="ACT 1" evidence="1">
    <location>
        <begin position="372"/>
        <end position="440"/>
    </location>
</feature>
<feature type="domain" description="ACT 2" evidence="1">
    <location>
        <begin position="446"/>
        <end position="510"/>
    </location>
</feature>
<sequence>MRSRRDNSWVAQKFGGTSIGKFPDKVAEIVKSARLGGDRPAVICSARSSGKKVFGTTSRLLQVYRTLRGIVAITQDPDMQELLFDRLRSIIRDIRDDQVATVQMYILRQDIRDDTIRQITADCQELLDYTSAAKRFNLDINGKAKDKMVSFGEKLSCRLMVAMLRDRDIPAEYVDLSDIVPSNNLDQLRPDFFHEAAAVFGKRVEACNGRVPVITGFFGAVPGSLIDSGIGRGYSDLCAVLVAIGLHAERVQIWKEVDGIFTADPREVPDARCLPSITPSEAAELTFYGSEVIHHLALSLAIQAKPPVSIFVKNVQKPWGQGTVVVPTDGDDTSSWPIDYLDPSDSDSTSSTALPKMPTAVTIKRDITIFNILSNKQSMSHGFFVKVFTILAEHDISVDLISTSEVHVSMAINSSNMDPSQIKNVQCRLAEEGEVNVLPDMAILSLVGAELKNMTGIAGKMFAILGEQDVNIEMISQGASEINISCVIPDKDATRALNMLHDELFTKNAI</sequence>
<organism>
    <name type="scientific">Gibberella fujikuroi (strain CBS 195.34 / IMI 58289 / NRRL A-6831)</name>
    <name type="common">Bakanae and foot rot disease fungus</name>
    <name type="synonym">Fusarium fujikuroi</name>
    <dbReference type="NCBI Taxonomy" id="1279085"/>
    <lineage>
        <taxon>Eukaryota</taxon>
        <taxon>Fungi</taxon>
        <taxon>Dikarya</taxon>
        <taxon>Ascomycota</taxon>
        <taxon>Pezizomycotina</taxon>
        <taxon>Sordariomycetes</taxon>
        <taxon>Hypocreomycetidae</taxon>
        <taxon>Hypocreales</taxon>
        <taxon>Nectriaceae</taxon>
        <taxon>Fusarium</taxon>
        <taxon>Fusarium fujikuroi species complex</taxon>
    </lineage>
</organism>
<gene>
    <name evidence="11" type="primary">FUB3</name>
    <name type="ORF">FFUJ_02107</name>
</gene>
<comment type="function">
    <text evidence="9 10">Aspartate kinase; part of the gene cluster that mediates the biosynthesis of fusaric acid, a mycotoxin with low to moderate toxicity to animals and humans, but with high phytotoxic properties (PubMed:24389666, PubMed:26662839). L-aspartate is suggested as fusaric acid amino acid precursor that is activated and further processed to O-acetyl-L-homoserine by cluster enzymes aspartate kinase FUB3 and homoserine O-acetyltransferase FUB5, as well as enzymes of the primary metabolism (PubMed:26662839). The polyketide synthase (PKS) FUB1 generates the triketide trans-2-hexenal which is presumptively released by the hydrolase FUB4 and linked to the NRPS-bound amino acid precursor by NAD(P)-dependent dehydrogenase FUB6 (PubMed:26662839). FUB1, FUB4, and the non-canonical NRPS Fub8 may form an enzyme complex (PubMed:26662839). Further processing of the NRPS-bound intermediate might be carried out by FUB6 and the sulfhydrylase FUB7, enabling a spontaneous electrocyclization to close the carbon backbone of fusaric acid (PubMed:26662839). Dihydrofusaric acid is likely to be released via reduction by the thioester reductase (TR) domain of FUB8 whereupon the final oxidation to fusaric acid may (also) be performed by the FMN-dependent dehydrogenase FUB9 (PubMed:26662839).</text>
</comment>
<comment type="catalytic activity">
    <reaction evidence="13">
        <text>L-aspartate + ATP = 4-phospho-L-aspartate + ADP</text>
        <dbReference type="Rhea" id="RHEA:23776"/>
        <dbReference type="ChEBI" id="CHEBI:29991"/>
        <dbReference type="ChEBI" id="CHEBI:30616"/>
        <dbReference type="ChEBI" id="CHEBI:57535"/>
        <dbReference type="ChEBI" id="CHEBI:456216"/>
        <dbReference type="EC" id="2.7.2.4"/>
    </reaction>
</comment>
<comment type="pathway">
    <text evidence="10">Mycotoxin biosynthesis.</text>
</comment>
<comment type="disruption phenotype">
    <text evidence="9">Impairs the production of fusaric acid (PubMed:24389666).</text>
</comment>
<comment type="biotechnology">
    <text evidence="2 3 4 5 6 7 8">Fusaric acid is phytotoxic to plants such as cotton and banana (PubMed:20955724, PubMed:23922960). It has been shown to induce programmed cell death in plants (PubMed:16868776, PubMed:23838885). In addition to a mild toxicity to animals, fusaric acid exhibits acanthamoebicidal, antioomycete, and antimycobacterial activities (PubMed:17927749, PubMed:21811925, PubMed:22864988).</text>
</comment>
<comment type="similarity">
    <text evidence="12">Belongs to the aspartokinase family.</text>
</comment>
<accession>S0DVT6</accession>
<reference key="1">
    <citation type="journal article" date="2013" name="PLoS Pathog.">
        <title>Deciphering the cryptic genome: genome-wide analyses of the rice pathogen Fusarium fujikuroi reveal complex regulation of secondary metabolism and novel metabolites.</title>
        <authorList>
            <person name="Wiemann P."/>
            <person name="Sieber C.M.K."/>
            <person name="von Bargen K.W."/>
            <person name="Studt L."/>
            <person name="Niehaus E.-M."/>
            <person name="Espino J.J."/>
            <person name="Huss K."/>
            <person name="Michielse C.B."/>
            <person name="Albermann S."/>
            <person name="Wagner D."/>
            <person name="Bergner S.V."/>
            <person name="Connolly L.R."/>
            <person name="Fischer A."/>
            <person name="Reuter G."/>
            <person name="Kleigrewe K."/>
            <person name="Bald T."/>
            <person name="Wingfield B.D."/>
            <person name="Ophir R."/>
            <person name="Freeman S."/>
            <person name="Hippler M."/>
            <person name="Smith K.M."/>
            <person name="Brown D.W."/>
            <person name="Proctor R.H."/>
            <person name="Muensterkoetter M."/>
            <person name="Freitag M."/>
            <person name="Humpf H.-U."/>
            <person name="Gueldener U."/>
            <person name="Tudzynski B."/>
        </authorList>
    </citation>
    <scope>NUCLEOTIDE SEQUENCE [LARGE SCALE GENOMIC DNA]</scope>
    <source>
        <strain>CBS 195.34 / IMI 58289 / NRRL A-6831</strain>
    </source>
</reference>
<reference key="2">
    <citation type="journal article" date="2006" name="Planta">
        <title>Fusaric acid induces apoptosis in saffron root-tip cells: roles of caspase-like activity, cytochrome c, and H2O2.</title>
        <authorList>
            <person name="Samadi L."/>
            <person name="Shahsavan Behboodi B."/>
        </authorList>
    </citation>
    <scope>BIOTECHNOLOGY</scope>
</reference>
<reference key="3">
    <citation type="journal article" date="2008" name="J. Appl. Microbiol.">
        <title>Bikaverin and fusaric acid from Fusarium oxysporum show antioomycete activity against Phytophthora infestans.</title>
        <authorList>
            <person name="Son S.W."/>
            <person name="Kim H.Y."/>
            <person name="Choi G.J."/>
            <person name="Lim H.K."/>
            <person name="Jang K.S."/>
            <person name="Lee S.O."/>
            <person name="Lee S."/>
            <person name="Sung N.D."/>
            <person name="Kim J.C."/>
        </authorList>
    </citation>
    <scope>BIOTECHNOLOGY</scope>
</reference>
<reference key="4">
    <citation type="journal article" date="2011" name="Arch. Pharm. Res.">
        <title>Antimycobacterial activity of fusaric acid from a mangrove endophyte and its metal complexes.</title>
        <authorList>
            <person name="Pan J.H."/>
            <person name="Chen Y."/>
            <person name="Huang Y.H."/>
            <person name="Tao Y.W."/>
            <person name="Wang J."/>
            <person name="Li Y."/>
            <person name="Peng Y."/>
            <person name="Dong T."/>
            <person name="Lai X.M."/>
            <person name="Lin Y.C."/>
        </authorList>
    </citation>
    <scope>BIOTECHNOLOGY</scope>
</reference>
<reference key="5">
    <citation type="journal article" date="2011" name="Toxicon">
        <title>Phytotoxicity of fusaric acid and analogs to cotton.</title>
        <authorList>
            <person name="Stipanovic R.D."/>
            <person name="Puckhaber L.S."/>
            <person name="Liu J."/>
            <person name="Bell A.A."/>
        </authorList>
    </citation>
    <scope>BIOTECHNOLOGY</scope>
</reference>
<reference key="6">
    <citation type="journal article" date="2012" name="Planta Med.">
        <title>In vitro acanthamoebicidal activity of fusaric acid and dehydrofusaric acid from an endophytic fungus Fusarium sp. Tlau3.</title>
        <authorList>
            <person name="Boonman N."/>
            <person name="Prachya S."/>
            <person name="Boonmee A."/>
            <person name="Kittakoop P."/>
            <person name="Wiyakrutta S."/>
            <person name="Sriubolmas N."/>
            <person name="Warit S."/>
            <person name="Dharmkrong-At Chusattayanond A."/>
        </authorList>
    </citation>
    <scope>BIOTECHNOLOGY</scope>
</reference>
<reference key="7">
    <citation type="journal article" date="2013" name="Planta">
        <title>Fusaric acid induction of programmed cell death modulated through nitric oxide signalling in tobacco suspension cells.</title>
        <authorList>
            <person name="Jiao J."/>
            <person name="Zhou B."/>
            <person name="Zhu X."/>
            <person name="Gao Z."/>
            <person name="Liang Y."/>
        </authorList>
    </citation>
    <scope>BIOTECHNOLOGY</scope>
</reference>
<reference key="8">
    <citation type="journal article" date="2013" name="PLoS ONE">
        <title>Contamination of bananas with beauvericin and fusaric acid produced by Fusarium oxysporum f. sp. cubense.</title>
        <authorList>
            <person name="Li C."/>
            <person name="Zuo C."/>
            <person name="Deng G."/>
            <person name="Kuang R."/>
            <person name="Yang Q."/>
            <person name="Hu C."/>
            <person name="Sheng O."/>
            <person name="Zhang S."/>
            <person name="Ma L."/>
            <person name="Wei Y."/>
            <person name="Yang J."/>
            <person name="Liu S."/>
            <person name="Biswas M.K."/>
            <person name="Viljoen A."/>
            <person name="Yi G."/>
        </authorList>
    </citation>
    <scope>BIOTECHNOLOGY</scope>
</reference>
<reference key="9">
    <citation type="journal article" date="2014" name="Appl. Microbiol. Biotechnol.">
        <title>Characterization of the fusaric acid gene cluster in Fusarium fujikuroi.</title>
        <authorList>
            <person name="Niehaus E.M."/>
            <person name="von Bargen K.W."/>
            <person name="Espino J.J."/>
            <person name="Pfannmueller A."/>
            <person name="Humpf H.U."/>
            <person name="Tudzynski B."/>
        </authorList>
    </citation>
    <scope>FUNCTION</scope>
    <scope>DISRUPTION PHENOTYPE</scope>
</reference>
<reference key="10">
    <citation type="journal article" date="2016" name="Environ. Microbiol.">
        <title>Two separate key enzymes and two pathway-specific transcription factors are involved in fusaric acid biosynthesis in Fusarium fujikuroi.</title>
        <authorList>
            <person name="Studt L."/>
            <person name="Janevska S."/>
            <person name="Niehaus E.M."/>
            <person name="Burkhardt I."/>
            <person name="Arndt B."/>
            <person name="Sieber C.M."/>
            <person name="Humpf H.U."/>
            <person name="Dickschat J.S."/>
            <person name="Tudzynski B."/>
        </authorList>
    </citation>
    <scope>FUNCTION</scope>
    <scope>CATALYTIC ACTIVITY</scope>
</reference>
<dbReference type="EC" id="2.7.2.4" evidence="13"/>
<dbReference type="EMBL" id="HF679025">
    <property type="protein sequence ID" value="CCT66674.1"/>
    <property type="molecule type" value="Genomic_DNA"/>
</dbReference>
<dbReference type="SMR" id="S0DVT6"/>
<dbReference type="STRING" id="1279085.S0DVT6"/>
<dbReference type="EnsemblFungi" id="CCT66674">
    <property type="protein sequence ID" value="CCT66674"/>
    <property type="gene ID" value="FFUJ_02107"/>
</dbReference>
<dbReference type="VEuPathDB" id="FungiDB:FFUJ_02107"/>
<dbReference type="HOGENOM" id="CLU_009116_6_4_1"/>
<dbReference type="Proteomes" id="UP000016800">
    <property type="component" value="Chromosome 3"/>
</dbReference>
<dbReference type="GO" id="GO:0005829">
    <property type="term" value="C:cytosol"/>
    <property type="evidence" value="ECO:0007669"/>
    <property type="project" value="TreeGrafter"/>
</dbReference>
<dbReference type="GO" id="GO:0004072">
    <property type="term" value="F:aspartate kinase activity"/>
    <property type="evidence" value="ECO:0007669"/>
    <property type="project" value="UniProtKB-EC"/>
</dbReference>
<dbReference type="GO" id="GO:0005524">
    <property type="term" value="F:ATP binding"/>
    <property type="evidence" value="ECO:0007669"/>
    <property type="project" value="UniProtKB-KW"/>
</dbReference>
<dbReference type="GO" id="GO:0009090">
    <property type="term" value="P:homoserine biosynthetic process"/>
    <property type="evidence" value="ECO:0007669"/>
    <property type="project" value="TreeGrafter"/>
</dbReference>
<dbReference type="GO" id="GO:0009089">
    <property type="term" value="P:lysine biosynthetic process via diaminopimelate"/>
    <property type="evidence" value="ECO:0007669"/>
    <property type="project" value="InterPro"/>
</dbReference>
<dbReference type="FunFam" id="3.30.2130.10:FF:000001">
    <property type="entry name" value="Bifunctional aspartokinase/homoserine dehydrogenase"/>
    <property type="match status" value="1"/>
</dbReference>
<dbReference type="FunFam" id="3.40.1160.10:FF:000023">
    <property type="entry name" value="Probable aspartokinase"/>
    <property type="match status" value="1"/>
</dbReference>
<dbReference type="Gene3D" id="3.40.1160.10">
    <property type="entry name" value="Acetylglutamate kinase-like"/>
    <property type="match status" value="1"/>
</dbReference>
<dbReference type="Gene3D" id="3.30.2130.10">
    <property type="entry name" value="VC0802-like"/>
    <property type="match status" value="1"/>
</dbReference>
<dbReference type="InterPro" id="IPR036393">
    <property type="entry name" value="AceGlu_kinase-like_sf"/>
</dbReference>
<dbReference type="InterPro" id="IPR045865">
    <property type="entry name" value="ACT-like_dom_sf"/>
</dbReference>
<dbReference type="InterPro" id="IPR054352">
    <property type="entry name" value="ACT_Aspartokinase"/>
</dbReference>
<dbReference type="InterPro" id="IPR002912">
    <property type="entry name" value="ACT_dom"/>
</dbReference>
<dbReference type="InterPro" id="IPR001048">
    <property type="entry name" value="Asp/Glu/Uridylate_kinase"/>
</dbReference>
<dbReference type="InterPro" id="IPR005260">
    <property type="entry name" value="Asp_kin_monofn"/>
</dbReference>
<dbReference type="InterPro" id="IPR001341">
    <property type="entry name" value="Asp_kinase"/>
</dbReference>
<dbReference type="NCBIfam" id="TIGR00657">
    <property type="entry name" value="asp_kinases"/>
    <property type="match status" value="1"/>
</dbReference>
<dbReference type="PANTHER" id="PTHR21499">
    <property type="entry name" value="ASPARTATE KINASE"/>
    <property type="match status" value="1"/>
</dbReference>
<dbReference type="PANTHER" id="PTHR21499:SF59">
    <property type="entry name" value="ASPARTOKINASE"/>
    <property type="match status" value="1"/>
</dbReference>
<dbReference type="Pfam" id="PF00696">
    <property type="entry name" value="AA_kinase"/>
    <property type="match status" value="1"/>
</dbReference>
<dbReference type="Pfam" id="PF22468">
    <property type="entry name" value="ACT_9"/>
    <property type="match status" value="1"/>
</dbReference>
<dbReference type="PIRSF" id="PIRSF000726">
    <property type="entry name" value="Asp_kin"/>
    <property type="match status" value="1"/>
</dbReference>
<dbReference type="SUPFAM" id="SSF55021">
    <property type="entry name" value="ACT-like"/>
    <property type="match status" value="2"/>
</dbReference>
<dbReference type="SUPFAM" id="SSF53633">
    <property type="entry name" value="Carbamate kinase-like"/>
    <property type="match status" value="1"/>
</dbReference>
<dbReference type="PROSITE" id="PS51671">
    <property type="entry name" value="ACT"/>
    <property type="match status" value="2"/>
</dbReference>
<proteinExistence type="evidence at protein level"/>
<name>FUB3_GIBF5</name>
<keyword id="KW-0067">ATP-binding</keyword>
<keyword id="KW-0418">Kinase</keyword>
<keyword id="KW-0547">Nucleotide-binding</keyword>
<keyword id="KW-0597">Phosphoprotein</keyword>
<keyword id="KW-1185">Reference proteome</keyword>
<keyword id="KW-0677">Repeat</keyword>
<keyword id="KW-0808">Transferase</keyword>